<reference key="1">
    <citation type="submission" date="2005-08" db="EMBL/GenBank/DDBJ databases">
        <title>Complete sequence of chromosome 1 of Nitrosospira multiformis ATCC 25196.</title>
        <authorList>
            <person name="Copeland A."/>
            <person name="Lucas S."/>
            <person name="Lapidus A."/>
            <person name="Barry K."/>
            <person name="Detter J.C."/>
            <person name="Glavina T."/>
            <person name="Hammon N."/>
            <person name="Israni S."/>
            <person name="Pitluck S."/>
            <person name="Chain P."/>
            <person name="Malfatti S."/>
            <person name="Shin M."/>
            <person name="Vergez L."/>
            <person name="Schmutz J."/>
            <person name="Larimer F."/>
            <person name="Land M."/>
            <person name="Hauser L."/>
            <person name="Kyrpides N."/>
            <person name="Lykidis A."/>
            <person name="Richardson P."/>
        </authorList>
    </citation>
    <scope>NUCLEOTIDE SEQUENCE [LARGE SCALE GENOMIC DNA]</scope>
    <source>
        <strain>ATCC 25196 / NCIMB 11849 / C 71</strain>
    </source>
</reference>
<name>THIG_NITMU</name>
<dbReference type="EC" id="2.8.1.10" evidence="1"/>
<dbReference type="EMBL" id="CP000103">
    <property type="protein sequence ID" value="ABB73379.1"/>
    <property type="molecule type" value="Genomic_DNA"/>
</dbReference>
<dbReference type="RefSeq" id="WP_011379434.1">
    <property type="nucleotide sequence ID" value="NC_007614.1"/>
</dbReference>
<dbReference type="SMR" id="Q2YCZ2"/>
<dbReference type="STRING" id="323848.Nmul_A0070"/>
<dbReference type="KEGG" id="nmu:Nmul_A0070"/>
<dbReference type="eggNOG" id="COG2022">
    <property type="taxonomic scope" value="Bacteria"/>
</dbReference>
<dbReference type="HOGENOM" id="CLU_062233_1_1_4"/>
<dbReference type="OrthoDB" id="9805935at2"/>
<dbReference type="UniPathway" id="UPA00060"/>
<dbReference type="Proteomes" id="UP000002718">
    <property type="component" value="Chromosome"/>
</dbReference>
<dbReference type="GO" id="GO:0005737">
    <property type="term" value="C:cytoplasm"/>
    <property type="evidence" value="ECO:0007669"/>
    <property type="project" value="UniProtKB-SubCell"/>
</dbReference>
<dbReference type="GO" id="GO:1990107">
    <property type="term" value="F:thiazole synthase activity"/>
    <property type="evidence" value="ECO:0007669"/>
    <property type="project" value="UniProtKB-EC"/>
</dbReference>
<dbReference type="GO" id="GO:0009229">
    <property type="term" value="P:thiamine diphosphate biosynthetic process"/>
    <property type="evidence" value="ECO:0007669"/>
    <property type="project" value="UniProtKB-UniRule"/>
</dbReference>
<dbReference type="CDD" id="cd04728">
    <property type="entry name" value="ThiG"/>
    <property type="match status" value="1"/>
</dbReference>
<dbReference type="Gene3D" id="3.20.20.70">
    <property type="entry name" value="Aldolase class I"/>
    <property type="match status" value="1"/>
</dbReference>
<dbReference type="HAMAP" id="MF_00443">
    <property type="entry name" value="ThiG"/>
    <property type="match status" value="1"/>
</dbReference>
<dbReference type="InterPro" id="IPR013785">
    <property type="entry name" value="Aldolase_TIM"/>
</dbReference>
<dbReference type="InterPro" id="IPR033983">
    <property type="entry name" value="Thiazole_synthase_ThiG"/>
</dbReference>
<dbReference type="InterPro" id="IPR008867">
    <property type="entry name" value="ThiG"/>
</dbReference>
<dbReference type="PANTHER" id="PTHR34266">
    <property type="entry name" value="THIAZOLE SYNTHASE"/>
    <property type="match status" value="1"/>
</dbReference>
<dbReference type="PANTHER" id="PTHR34266:SF2">
    <property type="entry name" value="THIAZOLE SYNTHASE"/>
    <property type="match status" value="1"/>
</dbReference>
<dbReference type="Pfam" id="PF05690">
    <property type="entry name" value="ThiG"/>
    <property type="match status" value="1"/>
</dbReference>
<dbReference type="SUPFAM" id="SSF110399">
    <property type="entry name" value="ThiG-like"/>
    <property type="match status" value="1"/>
</dbReference>
<accession>Q2YCZ2</accession>
<feature type="chain" id="PRO_0000236348" description="Thiazole synthase">
    <location>
        <begin position="1"/>
        <end position="264"/>
    </location>
</feature>
<feature type="active site" description="Schiff-base intermediate with DXP" evidence="1">
    <location>
        <position position="100"/>
    </location>
</feature>
<feature type="binding site" evidence="1">
    <location>
        <position position="161"/>
    </location>
    <ligand>
        <name>1-deoxy-D-xylulose 5-phosphate</name>
        <dbReference type="ChEBI" id="CHEBI:57792"/>
    </ligand>
</feature>
<feature type="binding site" evidence="1">
    <location>
        <begin position="187"/>
        <end position="188"/>
    </location>
    <ligand>
        <name>1-deoxy-D-xylulose 5-phosphate</name>
        <dbReference type="ChEBI" id="CHEBI:57792"/>
    </ligand>
</feature>
<feature type="binding site" evidence="1">
    <location>
        <begin position="209"/>
        <end position="210"/>
    </location>
    <ligand>
        <name>1-deoxy-D-xylulose 5-phosphate</name>
        <dbReference type="ChEBI" id="CHEBI:57792"/>
    </ligand>
</feature>
<evidence type="ECO:0000255" key="1">
    <source>
        <dbReference type="HAMAP-Rule" id="MF_00443"/>
    </source>
</evidence>
<keyword id="KW-0963">Cytoplasm</keyword>
<keyword id="KW-1185">Reference proteome</keyword>
<keyword id="KW-0704">Schiff base</keyword>
<keyword id="KW-0784">Thiamine biosynthesis</keyword>
<keyword id="KW-0808">Transferase</keyword>
<sequence length="264" mass="27970">MDKLVIAGKAYSSRLLVGTGKYRDFDETRTAVDASGAEIITVAIRRTNLGQNPEEPSLLDVLPPSEYTLLPNTAGCYTVEDAVRTLRLARELLDGHTLVKLEVLGDPKTLYPNIVETLKAAEILIKEGFQVMVYTSDDPIAARQLEEIGCVAIMPLASLIGSGMGILNPWNLQIIIENAKVPVIVDAGVGTASDAAIAMELGCDGVLMNTAIAAAQNPVLMASAMKKAVEAGREAYLAGRMPKKLYSASPSSPVEGVIGNMSGK</sequence>
<protein>
    <recommendedName>
        <fullName evidence="1">Thiazole synthase</fullName>
        <ecNumber evidence="1">2.8.1.10</ecNumber>
    </recommendedName>
</protein>
<organism>
    <name type="scientific">Nitrosospira multiformis (strain ATCC 25196 / NCIMB 11849 / C 71)</name>
    <dbReference type="NCBI Taxonomy" id="323848"/>
    <lineage>
        <taxon>Bacteria</taxon>
        <taxon>Pseudomonadati</taxon>
        <taxon>Pseudomonadota</taxon>
        <taxon>Betaproteobacteria</taxon>
        <taxon>Nitrosomonadales</taxon>
        <taxon>Nitrosomonadaceae</taxon>
        <taxon>Nitrosospira</taxon>
    </lineage>
</organism>
<proteinExistence type="inferred from homology"/>
<comment type="function">
    <text evidence="1">Catalyzes the rearrangement of 1-deoxy-D-xylulose 5-phosphate (DXP) to produce the thiazole phosphate moiety of thiamine. Sulfur is provided by the thiocarboxylate moiety of the carrier protein ThiS. In vitro, sulfur can be provided by H(2)S.</text>
</comment>
<comment type="catalytic activity">
    <reaction evidence="1">
        <text>[ThiS sulfur-carrier protein]-C-terminal-Gly-aminoethanethioate + 2-iminoacetate + 1-deoxy-D-xylulose 5-phosphate = [ThiS sulfur-carrier protein]-C-terminal Gly-Gly + 2-[(2R,5Z)-2-carboxy-4-methylthiazol-5(2H)-ylidene]ethyl phosphate + 2 H2O + H(+)</text>
        <dbReference type="Rhea" id="RHEA:26297"/>
        <dbReference type="Rhea" id="RHEA-COMP:12909"/>
        <dbReference type="Rhea" id="RHEA-COMP:19908"/>
        <dbReference type="ChEBI" id="CHEBI:15377"/>
        <dbReference type="ChEBI" id="CHEBI:15378"/>
        <dbReference type="ChEBI" id="CHEBI:57792"/>
        <dbReference type="ChEBI" id="CHEBI:62899"/>
        <dbReference type="ChEBI" id="CHEBI:77846"/>
        <dbReference type="ChEBI" id="CHEBI:90778"/>
        <dbReference type="ChEBI" id="CHEBI:232372"/>
        <dbReference type="EC" id="2.8.1.10"/>
    </reaction>
</comment>
<comment type="pathway">
    <text evidence="1">Cofactor biosynthesis; thiamine diphosphate biosynthesis.</text>
</comment>
<comment type="subunit">
    <text evidence="1">Homotetramer. Forms heterodimers with either ThiH or ThiS.</text>
</comment>
<comment type="subcellular location">
    <subcellularLocation>
        <location evidence="1">Cytoplasm</location>
    </subcellularLocation>
</comment>
<comment type="similarity">
    <text evidence="1">Belongs to the ThiG family.</text>
</comment>
<gene>
    <name evidence="1" type="primary">thiG</name>
    <name type="ordered locus">Nmul_A0070</name>
</gene>